<gene>
    <name type="primary">Tgm3</name>
    <name type="synonym">Tgase3</name>
</gene>
<sequence length="693" mass="77309">MSALQIQNVNWQVPMNRRAHHTDKFSSQDSIVRRGQPWEIILVCNRSLESGEDLNFIVSTGPQPSESARTKAVFSISGRSTGGWNAALKANSGNNLAIAIASPVSAPIGLYTLSVEISSRGRASSLKLGTFIMLFNPWLQADDVFMSNHAERQEYVEEDSGIIYVGSTNRIGMVGWNFGQFEEDILNISLSILDRSLNFRRDPVTDVARRNDPKYVCRVLSAMINGNDDNGVISGNWSGNYTGGVDPRTWNGSVEILKNWKKSGFRPVQFGQCWVFAGTLNTVLRCLGVPSRVITNFNSAHDTDRNLSVDVYYDAMGNPLEKGSDSVWNFHVWNEGWFVRTDLGPTYNGWQVLDATPQERSQGVFQCGPASVNAIKAGDVDRNFDMIFIFAEVNADRITWIYNNRNNTQKQNSVDTHSIGKYISTKAVGSNSRMDVTDKYKYPEGSSEERQVHQKALDKLKPNASFGATSSRNPEGEDKEPSISGKFKVTGILAVGKEVSLSLMLKNMTNDRKTVTMNMTAWTIVYNGTLVHEVWKDSATISLDPEEEIQYPVKIAYSQYERYLKADNMIRITAVCKVPDEAEVVVERDVILDNPALTLEVLEQAHVRKPVNVQMLFSNPLDQPVNNCVLLVEGSGLLRGSLKIDVPSLRPKEKSRIRFEIFPTRSGTKQLLADFSCNKFPAIKAMLPIDVSE</sequence>
<name>TGM3_MOUSE</name>
<evidence type="ECO:0000250" key="1"/>
<evidence type="ECO:0000250" key="2">
    <source>
        <dbReference type="UniProtKB" id="Q08188"/>
    </source>
</evidence>
<evidence type="ECO:0000255" key="3">
    <source>
        <dbReference type="PROSITE-ProRule" id="PRU10024"/>
    </source>
</evidence>
<evidence type="ECO:0000256" key="4">
    <source>
        <dbReference type="SAM" id="MobiDB-lite"/>
    </source>
</evidence>
<evidence type="ECO:0000269" key="5">
    <source>
    </source>
</evidence>
<evidence type="ECO:0000269" key="6">
    <source>
    </source>
</evidence>
<evidence type="ECO:0000269" key="7">
    <source>
    </source>
</evidence>
<evidence type="ECO:0000305" key="8"/>
<protein>
    <recommendedName>
        <fullName>Protein-glutamine gamma-glutamyltransferase E</fullName>
        <ecNumber evidence="2">2.3.2.13</ecNumber>
    </recommendedName>
    <alternativeName>
        <fullName>Transglutaminase E</fullName>
        <shortName>TG(E)</shortName>
        <shortName>TGE</shortName>
        <shortName>TGase E</shortName>
    </alternativeName>
    <alternativeName>
        <fullName>Transglutaminase-3</fullName>
        <shortName>TGase-3</shortName>
    </alternativeName>
    <component>
        <recommendedName>
            <fullName>Protein-glutamine gamma-glutamyltransferase E 50 kDa catalytic chain</fullName>
        </recommendedName>
    </component>
    <component>
        <recommendedName>
            <fullName>Protein-glutamine gamma-glutamyltransferase E 27 kDa non-catalytic chain</fullName>
        </recommendedName>
    </component>
</protein>
<reference key="1">
    <citation type="journal article" date="1993" name="J. Biol. Chem.">
        <title>The deduced sequence of the novel protransglutaminase E (TGase3) of human and mouse.</title>
        <authorList>
            <person name="Kim I.-G."/>
            <person name="Gorman J.J."/>
            <person name="Park S.-C."/>
            <person name="Chung S.-I."/>
            <person name="Steinert P.M."/>
        </authorList>
    </citation>
    <scope>NUCLEOTIDE SEQUENCE [MRNA]</scope>
    <source>
        <strain>BALB/cJ</strain>
        <tissue>Epidermis</tissue>
    </source>
</reference>
<reference key="2">
    <citation type="journal article" date="2009" name="PLoS Biol.">
        <title>Lineage-specific biology revealed by a finished genome assembly of the mouse.</title>
        <authorList>
            <person name="Church D.M."/>
            <person name="Goodstadt L."/>
            <person name="Hillier L.W."/>
            <person name="Zody M.C."/>
            <person name="Goldstein S."/>
            <person name="She X."/>
            <person name="Bult C.J."/>
            <person name="Agarwala R."/>
            <person name="Cherry J.L."/>
            <person name="DiCuccio M."/>
            <person name="Hlavina W."/>
            <person name="Kapustin Y."/>
            <person name="Meric P."/>
            <person name="Maglott D."/>
            <person name="Birtle Z."/>
            <person name="Marques A.C."/>
            <person name="Graves T."/>
            <person name="Zhou S."/>
            <person name="Teague B."/>
            <person name="Potamousis K."/>
            <person name="Churas C."/>
            <person name="Place M."/>
            <person name="Herschleb J."/>
            <person name="Runnheim R."/>
            <person name="Forrest D."/>
            <person name="Amos-Landgraf J."/>
            <person name="Schwartz D.C."/>
            <person name="Cheng Z."/>
            <person name="Lindblad-Toh K."/>
            <person name="Eichler E.E."/>
            <person name="Ponting C.P."/>
        </authorList>
    </citation>
    <scope>NUCLEOTIDE SEQUENCE [LARGE SCALE GENOMIC DNA]</scope>
    <source>
        <strain>C57BL/6J</strain>
    </source>
</reference>
<reference key="3">
    <citation type="submission" date="2005-07" db="EMBL/GenBank/DDBJ databases">
        <authorList>
            <person name="Mural R.J."/>
            <person name="Adams M.D."/>
            <person name="Myers E.W."/>
            <person name="Smith H.O."/>
            <person name="Venter J.C."/>
        </authorList>
    </citation>
    <scope>NUCLEOTIDE SEQUENCE [LARGE SCALE GENOMIC DNA]</scope>
</reference>
<reference key="4">
    <citation type="journal article" date="2004" name="Genome Res.">
        <title>The status, quality, and expansion of the NIH full-length cDNA project: the Mammalian Gene Collection (MGC).</title>
        <authorList>
            <consortium name="The MGC Project Team"/>
        </authorList>
    </citation>
    <scope>NUCLEOTIDE SEQUENCE [LARGE SCALE MRNA]</scope>
</reference>
<reference key="5">
    <citation type="journal article" date="2001" name="Int. J. Biochem. Cell Biol.">
        <title>Analysis of epidermal-type transglutaminase (TGase 3) expression in mouse tissues and cell lines.</title>
        <authorList>
            <person name="Hitomi K."/>
            <person name="Horio Y."/>
            <person name="Ikura K."/>
            <person name="Yamanishi K."/>
            <person name="Maki M."/>
        </authorList>
    </citation>
    <scope>TISSUE SPECIFICITY</scope>
</reference>
<reference key="6">
    <citation type="journal article" date="2005" name="Cell Res.">
        <title>Transglutaminase 3 expression in C57BL/6J mouse embryo epidermis and the correlation with its differentiation.</title>
        <authorList>
            <person name="Zhang J."/>
            <person name="Zhi H.Y."/>
            <person name="Ding F."/>
            <person name="Luo A.P."/>
            <person name="Liu Z.H."/>
        </authorList>
    </citation>
    <scope>DEVELOPMENTAL STAGE</scope>
</reference>
<reference key="7">
    <citation type="journal article" date="2010" name="FEBS J.">
        <title>Identification of a preferred substrate peptide for transglutaminase 3 and detection of in situ activity in skin and hair follicles.</title>
        <authorList>
            <person name="Yamane A."/>
            <person name="Fukui M."/>
            <person name="Sugimura Y."/>
            <person name="Itoh M."/>
            <person name="Alea M.P."/>
            <person name="Thomas V."/>
            <person name="El Alaoui S."/>
            <person name="Akiyama M."/>
            <person name="Hitomi K."/>
        </authorList>
    </citation>
    <scope>TISSUE SPECIFICITY</scope>
</reference>
<organism>
    <name type="scientific">Mus musculus</name>
    <name type="common">Mouse</name>
    <dbReference type="NCBI Taxonomy" id="10090"/>
    <lineage>
        <taxon>Eukaryota</taxon>
        <taxon>Metazoa</taxon>
        <taxon>Chordata</taxon>
        <taxon>Craniata</taxon>
        <taxon>Vertebrata</taxon>
        <taxon>Euteleostomi</taxon>
        <taxon>Mammalia</taxon>
        <taxon>Eutheria</taxon>
        <taxon>Euarchontoglires</taxon>
        <taxon>Glires</taxon>
        <taxon>Rodentia</taxon>
        <taxon>Myomorpha</taxon>
        <taxon>Muroidea</taxon>
        <taxon>Muridae</taxon>
        <taxon>Murinae</taxon>
        <taxon>Mus</taxon>
        <taxon>Mus</taxon>
    </lineage>
</organism>
<comment type="function">
    <text evidence="1">Catalyzes the calcium-dependent formation of isopeptide cross-links between glutamine and lysine residues in various proteins, as well as the conjugation of polyamines to proteins. Involved in the formation of the cornified envelope (CE), a specialized component consisting of covalent cross-links of proteins beneath the plasma membrane of terminally differentiated keratinocytes. Catalyzes small proline-rich proteins (SPRR1 and SPRR2) and LOR cross-linking to form small interchain oligomers, which are further cross-linked by TGM1 onto the growing CE scaffold (By similarity). In hair follicles, involved in cross-linking structural proteins to hardening the inner root sheath.</text>
</comment>
<comment type="catalytic activity">
    <reaction evidence="2 3">
        <text>L-glutaminyl-[protein] + L-lysyl-[protein] = [protein]-L-lysyl-N(6)-5-L-glutamyl-[protein] + NH4(+)</text>
        <dbReference type="Rhea" id="RHEA:54816"/>
        <dbReference type="Rhea" id="RHEA-COMP:9752"/>
        <dbReference type="Rhea" id="RHEA-COMP:10207"/>
        <dbReference type="Rhea" id="RHEA-COMP:14005"/>
        <dbReference type="ChEBI" id="CHEBI:28938"/>
        <dbReference type="ChEBI" id="CHEBI:29969"/>
        <dbReference type="ChEBI" id="CHEBI:30011"/>
        <dbReference type="ChEBI" id="CHEBI:138370"/>
        <dbReference type="EC" id="2.3.2.13"/>
    </reaction>
</comment>
<comment type="cofactor">
    <cofactor evidence="1">
        <name>Ca(2+)</name>
        <dbReference type="ChEBI" id="CHEBI:29108"/>
    </cofactor>
    <text evidence="1">Binds 3 Ca(2+) cations per subunit. Binds 1 Ca(2+) as a zymogen, and binds 2 more Ca(2+) cations, or other divalent metal cations, after proteolytic processing.</text>
</comment>
<comment type="subunit">
    <text>Consists of two polypeptide chains, which are synthesized as a precursor form of a single polypeptide.</text>
</comment>
<comment type="subcellular location">
    <subcellularLocation>
        <location evidence="2">Cytoplasm</location>
    </subcellularLocation>
</comment>
<comment type="tissue specificity">
    <text evidence="5 7">Expressed in skin and stomach and, at lower levels, in testis, kidney and spleen (at protein level). On the basis of its catalytic activity, detected in the epidermis, around the granular and spinous layers but not in the outermost cornified layers. In hair follicles, mainly located in the medulla and the hair cortex.</text>
</comment>
<comment type="developmental stage">
    <text evidence="6">Expression starts at 11.5 dpc in the early two-layered epidermis. From 12.5 dpc, mainly expressed in the periderm cells and weakly in the epidermal basal cells. After epidermis keratinization, at 15.5 to 17.5 dpc, detected in the granular, cornified layers and in the hair follicle. Also expressed in heart, lung, bone, muscle, testis and blood vessels at 12.5, 13.5, 14.5 and 16.5 dpc, respectively.</text>
</comment>
<comment type="PTM">
    <text evidence="1">Activated by proteolytic processing. In vitro activation is commonly achieved by cleavage with dispase, a neutral bacterial protease. Physiological activation may be catalyzed by CTSL and, to a lesser extent, by CTSS (By similarity).</text>
</comment>
<comment type="similarity">
    <text evidence="8">Belongs to the transglutaminase superfamily. Transglutaminase family.</text>
</comment>
<comment type="sequence caution" evidence="8">
    <conflict type="frameshift">
        <sequence resource="EMBL-CDS" id="AAA40421"/>
    </conflict>
</comment>
<feature type="chain" id="PRO_0000033654" description="Protein-glutamine gamma-glutamyltransferase E 50 kDa catalytic chain">
    <location>
        <begin position="1"/>
        <end position="467"/>
    </location>
</feature>
<feature type="chain" id="PRO_0000033655" description="Protein-glutamine gamma-glutamyltransferase E 27 kDa non-catalytic chain">
    <location>
        <begin position="468"/>
        <end position="693"/>
    </location>
</feature>
<feature type="region of interest" description="Disordered" evidence="4">
    <location>
        <begin position="457"/>
        <end position="483"/>
    </location>
</feature>
<feature type="active site" evidence="3">
    <location>
        <position position="273"/>
    </location>
</feature>
<feature type="active site" evidence="3">
    <location>
        <position position="331"/>
    </location>
</feature>
<feature type="active site" evidence="3">
    <location>
        <position position="354"/>
    </location>
</feature>
<feature type="binding site" evidence="1">
    <location>
        <position position="222"/>
    </location>
    <ligand>
        <name>Ca(2+)</name>
        <dbReference type="ChEBI" id="CHEBI:29108"/>
        <label>1</label>
    </ligand>
</feature>
<feature type="binding site" evidence="1">
    <location>
        <position position="225"/>
    </location>
    <ligand>
        <name>Ca(2+)</name>
        <dbReference type="ChEBI" id="CHEBI:29108"/>
        <label>1</label>
    </ligand>
</feature>
<feature type="binding site" evidence="1">
    <location>
        <position position="227"/>
    </location>
    <ligand>
        <name>Ca(2+)</name>
        <dbReference type="ChEBI" id="CHEBI:29108"/>
        <label>1</label>
    </ligand>
</feature>
<feature type="binding site" evidence="1">
    <location>
        <position position="228"/>
    </location>
    <ligand>
        <name>Ca(2+)</name>
        <dbReference type="ChEBI" id="CHEBI:29108"/>
        <label>1</label>
    </ligand>
</feature>
<feature type="binding site" evidence="1">
    <location>
        <position position="230"/>
    </location>
    <ligand>
        <name>Ca(2+)</name>
        <dbReference type="ChEBI" id="CHEBI:29108"/>
        <label>1</label>
    </ligand>
</feature>
<feature type="binding site" evidence="1">
    <location>
        <position position="302"/>
    </location>
    <ligand>
        <name>Ca(2+)</name>
        <dbReference type="ChEBI" id="CHEBI:29108"/>
        <label>2</label>
    </ligand>
</feature>
<feature type="binding site" evidence="1">
    <location>
        <position position="304"/>
    </location>
    <ligand>
        <name>Ca(2+)</name>
        <dbReference type="ChEBI" id="CHEBI:29108"/>
        <label>2</label>
    </ligand>
</feature>
<feature type="binding site" evidence="1">
    <location>
        <position position="306"/>
    </location>
    <ligand>
        <name>Ca(2+)</name>
        <dbReference type="ChEBI" id="CHEBI:29108"/>
        <label>2</label>
    </ligand>
</feature>
<feature type="binding site" evidence="1">
    <location>
        <position position="308"/>
    </location>
    <ligand>
        <name>Ca(2+)</name>
        <dbReference type="ChEBI" id="CHEBI:29108"/>
        <label>2</label>
    </ligand>
</feature>
<feature type="binding site" evidence="1">
    <location>
        <position position="325"/>
    </location>
    <ligand>
        <name>Ca(2+)</name>
        <dbReference type="ChEBI" id="CHEBI:29108"/>
        <label>2</label>
    </ligand>
</feature>
<feature type="binding site" evidence="1">
    <location>
        <position position="394"/>
    </location>
    <ligand>
        <name>Ca(2+)</name>
        <dbReference type="ChEBI" id="CHEBI:29108"/>
        <label>3</label>
    </ligand>
</feature>
<feature type="binding site">
    <location>
        <position position="416"/>
    </location>
    <ligand>
        <name>Ca(2+)</name>
        <dbReference type="ChEBI" id="CHEBI:29108"/>
        <label>3</label>
    </ligand>
</feature>
<feature type="binding site" evidence="1">
    <location>
        <position position="444"/>
    </location>
    <ligand>
        <name>Ca(2+)</name>
        <dbReference type="ChEBI" id="CHEBI:29108"/>
        <label>3</label>
    </ligand>
</feature>
<feature type="binding site" evidence="1">
    <location>
        <position position="449"/>
    </location>
    <ligand>
        <name>Ca(2+)</name>
        <dbReference type="ChEBI" id="CHEBI:29108"/>
        <label>3</label>
    </ligand>
</feature>
<feature type="site" description="Cleavage; by CTSL" evidence="1">
    <location>
        <begin position="467"/>
        <end position="468"/>
    </location>
</feature>
<feature type="modified residue" description="Phosphotyrosine" evidence="2">
    <location>
        <position position="111"/>
    </location>
</feature>
<feature type="modified residue" description="Phosphothreonine" evidence="2">
    <location>
        <position position="112"/>
    </location>
</feature>
<feature type="sequence conflict" description="In Ref. 1; AAA40421." evidence="8" ref="1">
    <original>P</original>
    <variation>R</variation>
    <location>
        <position position="290"/>
    </location>
</feature>
<feature type="sequence conflict" description="In Ref. 4; AAI29892/AAI29891." evidence="8" ref="4">
    <original>Q</original>
    <variation>P</variation>
    <location>
        <position position="409"/>
    </location>
</feature>
<feature type="sequence conflict" description="In Ref. 1; AAA40421." evidence="8" ref="1">
    <original>T</original>
    <variation>S</variation>
    <location>
        <position position="573"/>
    </location>
</feature>
<feature type="sequence conflict" description="In Ref. 1; AAA40421." evidence="8" ref="1">
    <original>R</original>
    <variation>W</variation>
    <location>
        <position position="588"/>
    </location>
</feature>
<feature type="sequence conflict" description="In Ref. 1; AAA40421." evidence="8" ref="1">
    <original>L</original>
    <variation>I</variation>
    <location>
        <position position="616"/>
    </location>
</feature>
<feature type="sequence conflict" description="In Ref. 1; AAA40421." evidence="8" ref="1">
    <original>R</original>
    <variation>G</variation>
    <location>
        <position position="639"/>
    </location>
</feature>
<feature type="sequence conflict" description="In Ref. 1; AAA40421." evidence="8" ref="1">
    <original>A</original>
    <variation>T</variation>
    <location>
        <position position="682"/>
    </location>
</feature>
<proteinExistence type="evidence at protein level"/>
<dbReference type="EC" id="2.3.2.13" evidence="2"/>
<dbReference type="EMBL" id="L10385">
    <property type="protein sequence ID" value="AAA40421.1"/>
    <property type="status" value="ALT_FRAME"/>
    <property type="molecule type" value="mRNA"/>
</dbReference>
<dbReference type="EMBL" id="AL808127">
    <property type="status" value="NOT_ANNOTATED_CDS"/>
    <property type="molecule type" value="Genomic_DNA"/>
</dbReference>
<dbReference type="EMBL" id="CH466519">
    <property type="protein sequence ID" value="EDL28248.1"/>
    <property type="molecule type" value="Genomic_DNA"/>
</dbReference>
<dbReference type="EMBL" id="BC129890">
    <property type="protein sequence ID" value="AAI29891.1"/>
    <property type="molecule type" value="mRNA"/>
</dbReference>
<dbReference type="EMBL" id="BC129891">
    <property type="protein sequence ID" value="AAI29892.1"/>
    <property type="molecule type" value="mRNA"/>
</dbReference>
<dbReference type="CCDS" id="CCDS38240.1"/>
<dbReference type="PIR" id="B45991">
    <property type="entry name" value="B45991"/>
</dbReference>
<dbReference type="RefSeq" id="NP_033400.2">
    <property type="nucleotide sequence ID" value="NM_009374.4"/>
</dbReference>
<dbReference type="SMR" id="Q08189"/>
<dbReference type="BioGRID" id="204169">
    <property type="interactions" value="11"/>
</dbReference>
<dbReference type="FunCoup" id="Q08189">
    <property type="interactions" value="160"/>
</dbReference>
<dbReference type="IntAct" id="Q08189">
    <property type="interactions" value="3"/>
</dbReference>
<dbReference type="STRING" id="10090.ENSMUSP00000105928"/>
<dbReference type="GlyGen" id="Q08189">
    <property type="glycosylation" value="1 site, 1 O-linked glycan (1 site)"/>
</dbReference>
<dbReference type="iPTMnet" id="Q08189"/>
<dbReference type="PhosphoSitePlus" id="Q08189"/>
<dbReference type="PaxDb" id="10090-ENSMUSP00000105928"/>
<dbReference type="PeptideAtlas" id="Q08189"/>
<dbReference type="ProteomicsDB" id="263169"/>
<dbReference type="Pumba" id="Q08189"/>
<dbReference type="DNASU" id="21818"/>
<dbReference type="Ensembl" id="ENSMUST00000110299.3">
    <property type="protein sequence ID" value="ENSMUSP00000105928.3"/>
    <property type="gene ID" value="ENSMUSG00000027401.10"/>
</dbReference>
<dbReference type="GeneID" id="21818"/>
<dbReference type="KEGG" id="mmu:21818"/>
<dbReference type="UCSC" id="uc008mig.2">
    <property type="organism name" value="mouse"/>
</dbReference>
<dbReference type="AGR" id="MGI:98732"/>
<dbReference type="CTD" id="7053"/>
<dbReference type="MGI" id="MGI:98732">
    <property type="gene designation" value="Tgm3"/>
</dbReference>
<dbReference type="VEuPathDB" id="HostDB:ENSMUSG00000027401"/>
<dbReference type="eggNOG" id="ENOG502QUPB">
    <property type="taxonomic scope" value="Eukaryota"/>
</dbReference>
<dbReference type="GeneTree" id="ENSGT01050000244866"/>
<dbReference type="HOGENOM" id="CLU_013435_1_0_1"/>
<dbReference type="InParanoid" id="Q08189"/>
<dbReference type="OMA" id="SMVGWNF"/>
<dbReference type="OrthoDB" id="437511at2759"/>
<dbReference type="PhylomeDB" id="Q08189"/>
<dbReference type="TreeFam" id="TF324278"/>
<dbReference type="BioGRID-ORCS" id="21818">
    <property type="hits" value="3 hits in 78 CRISPR screens"/>
</dbReference>
<dbReference type="ChiTaRS" id="Tgm3">
    <property type="organism name" value="mouse"/>
</dbReference>
<dbReference type="PRO" id="PR:Q08189"/>
<dbReference type="Proteomes" id="UP000000589">
    <property type="component" value="Chromosome 2"/>
</dbReference>
<dbReference type="RNAct" id="Q08189">
    <property type="molecule type" value="protein"/>
</dbReference>
<dbReference type="Bgee" id="ENSMUSG00000027401">
    <property type="expression patterns" value="Expressed in esophagus and 47 other cell types or tissues"/>
</dbReference>
<dbReference type="GO" id="GO:0062023">
    <property type="term" value="C:collagen-containing extracellular matrix"/>
    <property type="evidence" value="ECO:0007005"/>
    <property type="project" value="BHF-UCL"/>
</dbReference>
<dbReference type="GO" id="GO:0001533">
    <property type="term" value="C:cornified envelope"/>
    <property type="evidence" value="ECO:0000304"/>
    <property type="project" value="UniProtKB"/>
</dbReference>
<dbReference type="GO" id="GO:0005737">
    <property type="term" value="C:cytoplasm"/>
    <property type="evidence" value="ECO:0000250"/>
    <property type="project" value="UniProtKB"/>
</dbReference>
<dbReference type="GO" id="GO:0031234">
    <property type="term" value="C:extrinsic component of cytoplasmic side of plasma membrane"/>
    <property type="evidence" value="ECO:0000250"/>
    <property type="project" value="UniProtKB"/>
</dbReference>
<dbReference type="GO" id="GO:0032991">
    <property type="term" value="C:protein-containing complex"/>
    <property type="evidence" value="ECO:0007669"/>
    <property type="project" value="Ensembl"/>
</dbReference>
<dbReference type="GO" id="GO:0005509">
    <property type="term" value="F:calcium ion binding"/>
    <property type="evidence" value="ECO:0000250"/>
    <property type="project" value="UniProtKB"/>
</dbReference>
<dbReference type="GO" id="GO:0003824">
    <property type="term" value="F:catalytic activity"/>
    <property type="evidence" value="ECO:0000250"/>
    <property type="project" value="UniProtKB"/>
</dbReference>
<dbReference type="GO" id="GO:0003810">
    <property type="term" value="F:protein-glutamine gamma-glutamyltransferase activity"/>
    <property type="evidence" value="ECO:0000250"/>
    <property type="project" value="UniProtKB"/>
</dbReference>
<dbReference type="GO" id="GO:0005198">
    <property type="term" value="F:structural molecule activity"/>
    <property type="evidence" value="ECO:0000250"/>
    <property type="project" value="UniProtKB"/>
</dbReference>
<dbReference type="GO" id="GO:0008544">
    <property type="term" value="P:epidermis development"/>
    <property type="evidence" value="ECO:0000304"/>
    <property type="project" value="UniProtKB"/>
</dbReference>
<dbReference type="GO" id="GO:0035315">
    <property type="term" value="P:hair cell differentiation"/>
    <property type="evidence" value="ECO:0000304"/>
    <property type="project" value="UniProtKB"/>
</dbReference>
<dbReference type="GO" id="GO:0031424">
    <property type="term" value="P:keratinization"/>
    <property type="evidence" value="ECO:0007669"/>
    <property type="project" value="UniProtKB-KW"/>
</dbReference>
<dbReference type="GO" id="GO:0030216">
    <property type="term" value="P:keratinocyte differentiation"/>
    <property type="evidence" value="ECO:0000250"/>
    <property type="project" value="UniProtKB"/>
</dbReference>
<dbReference type="GO" id="GO:0018149">
    <property type="term" value="P:peptide cross-linking"/>
    <property type="evidence" value="ECO:0000250"/>
    <property type="project" value="UniProtKB"/>
</dbReference>
<dbReference type="GO" id="GO:0043588">
    <property type="term" value="P:skin development"/>
    <property type="evidence" value="ECO:0000304"/>
    <property type="project" value="UniProtKB"/>
</dbReference>
<dbReference type="FunFam" id="2.60.40.10:FF:000090">
    <property type="entry name" value="Protein-glutamine gamma-glutamyltransferase 2"/>
    <property type="match status" value="1"/>
</dbReference>
<dbReference type="FunFam" id="2.60.40.10:FF:000278">
    <property type="entry name" value="Protein-glutamine gamma-glutamyltransferase 2"/>
    <property type="match status" value="1"/>
</dbReference>
<dbReference type="FunFam" id="3.90.260.10:FF:000001">
    <property type="entry name" value="Protein-glutamine gamma-glutamyltransferase 2"/>
    <property type="match status" value="1"/>
</dbReference>
<dbReference type="FunFam" id="2.60.40.10:FF:000171">
    <property type="entry name" value="protein-glutamine gamma-glutamyltransferase 6"/>
    <property type="match status" value="1"/>
</dbReference>
<dbReference type="Gene3D" id="2.60.40.10">
    <property type="entry name" value="Immunoglobulins"/>
    <property type="match status" value="3"/>
</dbReference>
<dbReference type="Gene3D" id="3.90.260.10">
    <property type="entry name" value="Transglutaminase-like"/>
    <property type="match status" value="1"/>
</dbReference>
<dbReference type="InterPro" id="IPR013783">
    <property type="entry name" value="Ig-like_fold"/>
</dbReference>
<dbReference type="InterPro" id="IPR014756">
    <property type="entry name" value="Ig_E-set"/>
</dbReference>
<dbReference type="InterPro" id="IPR038765">
    <property type="entry name" value="Papain-like_cys_pep_sf"/>
</dbReference>
<dbReference type="InterPro" id="IPR050779">
    <property type="entry name" value="Transglutaminase"/>
</dbReference>
<dbReference type="InterPro" id="IPR002931">
    <property type="entry name" value="Transglutaminase-like"/>
</dbReference>
<dbReference type="InterPro" id="IPR036985">
    <property type="entry name" value="Transglutaminase-like_sf"/>
</dbReference>
<dbReference type="InterPro" id="IPR023608">
    <property type="entry name" value="Transglutaminase_animal"/>
</dbReference>
<dbReference type="InterPro" id="IPR013808">
    <property type="entry name" value="Transglutaminase_AS"/>
</dbReference>
<dbReference type="InterPro" id="IPR008958">
    <property type="entry name" value="Transglutaminase_C"/>
</dbReference>
<dbReference type="InterPro" id="IPR036238">
    <property type="entry name" value="Transglutaminase_C_sf"/>
</dbReference>
<dbReference type="InterPro" id="IPR001102">
    <property type="entry name" value="Transglutaminase_N"/>
</dbReference>
<dbReference type="PANTHER" id="PTHR11590">
    <property type="entry name" value="PROTEIN-GLUTAMINE GAMMA-GLUTAMYLTRANSFERASE"/>
    <property type="match status" value="1"/>
</dbReference>
<dbReference type="PANTHER" id="PTHR11590:SF36">
    <property type="entry name" value="PROTEIN-GLUTAMINE GAMMA-GLUTAMYLTRANSFERASE E"/>
    <property type="match status" value="1"/>
</dbReference>
<dbReference type="Pfam" id="PF00927">
    <property type="entry name" value="Transglut_C"/>
    <property type="match status" value="2"/>
</dbReference>
<dbReference type="Pfam" id="PF01841">
    <property type="entry name" value="Transglut_core"/>
    <property type="match status" value="1"/>
</dbReference>
<dbReference type="Pfam" id="PF00868">
    <property type="entry name" value="Transglut_N"/>
    <property type="match status" value="1"/>
</dbReference>
<dbReference type="PIRSF" id="PIRSF000459">
    <property type="entry name" value="TGM_EBP42"/>
    <property type="match status" value="1"/>
</dbReference>
<dbReference type="SMART" id="SM00460">
    <property type="entry name" value="TGc"/>
    <property type="match status" value="1"/>
</dbReference>
<dbReference type="SUPFAM" id="SSF54001">
    <property type="entry name" value="Cysteine proteinases"/>
    <property type="match status" value="1"/>
</dbReference>
<dbReference type="SUPFAM" id="SSF81296">
    <property type="entry name" value="E set domains"/>
    <property type="match status" value="1"/>
</dbReference>
<dbReference type="SUPFAM" id="SSF49309">
    <property type="entry name" value="Transglutaminase, two C-terminal domains"/>
    <property type="match status" value="2"/>
</dbReference>
<dbReference type="PROSITE" id="PS00547">
    <property type="entry name" value="TRANSGLUTAMINASES"/>
    <property type="match status" value="1"/>
</dbReference>
<accession>Q08189</accession>
<accession>A1L343</accession>
<accession>A2ANC3</accession>
<keyword id="KW-0012">Acyltransferase</keyword>
<keyword id="KW-0106">Calcium</keyword>
<keyword id="KW-0963">Cytoplasm</keyword>
<keyword id="KW-0417">Keratinization</keyword>
<keyword id="KW-0479">Metal-binding</keyword>
<keyword id="KW-0597">Phosphoprotein</keyword>
<keyword id="KW-1185">Reference proteome</keyword>
<keyword id="KW-0808">Transferase</keyword>
<keyword id="KW-0865">Zymogen</keyword>